<reference key="1">
    <citation type="journal article" date="1995" name="Science">
        <title>Whole-genome random sequencing and assembly of Haemophilus influenzae Rd.</title>
        <authorList>
            <person name="Fleischmann R.D."/>
            <person name="Adams M.D."/>
            <person name="White O."/>
            <person name="Clayton R.A."/>
            <person name="Kirkness E.F."/>
            <person name="Kerlavage A.R."/>
            <person name="Bult C.J."/>
            <person name="Tomb J.-F."/>
            <person name="Dougherty B.A."/>
            <person name="Merrick J.M."/>
            <person name="McKenney K."/>
            <person name="Sutton G.G."/>
            <person name="FitzHugh W."/>
            <person name="Fields C.A."/>
            <person name="Gocayne J.D."/>
            <person name="Scott J.D."/>
            <person name="Shirley R."/>
            <person name="Liu L.-I."/>
            <person name="Glodek A."/>
            <person name="Kelley J.M."/>
            <person name="Weidman J.F."/>
            <person name="Phillips C.A."/>
            <person name="Spriggs T."/>
            <person name="Hedblom E."/>
            <person name="Cotton M.D."/>
            <person name="Utterback T.R."/>
            <person name="Hanna M.C."/>
            <person name="Nguyen D.T."/>
            <person name="Saudek D.M."/>
            <person name="Brandon R.C."/>
            <person name="Fine L.D."/>
            <person name="Fritchman J.L."/>
            <person name="Fuhrmann J.L."/>
            <person name="Geoghagen N.S.M."/>
            <person name="Gnehm C.L."/>
            <person name="McDonald L.A."/>
            <person name="Small K.V."/>
            <person name="Fraser C.M."/>
            <person name="Smith H.O."/>
            <person name="Venter J.C."/>
        </authorList>
    </citation>
    <scope>NUCLEOTIDE SEQUENCE [LARGE SCALE GENOMIC DNA]</scope>
    <source>
        <strain>ATCC 51907 / DSM 11121 / KW20 / Rd</strain>
    </source>
</reference>
<name>PROQ_HAEIN</name>
<evidence type="ECO:0000255" key="1">
    <source>
        <dbReference type="HAMAP-Rule" id="MF_00749"/>
    </source>
</evidence>
<evidence type="ECO:0000256" key="2">
    <source>
        <dbReference type="SAM" id="MobiDB-lite"/>
    </source>
</evidence>
<evidence type="ECO:0000305" key="3"/>
<feature type="chain" id="PRO_0000214618" description="RNA chaperone ProQ">
    <location>
        <begin position="1"/>
        <end position="197"/>
    </location>
</feature>
<feature type="region of interest" description="Disordered" evidence="2">
    <location>
        <begin position="115"/>
        <end position="138"/>
    </location>
</feature>
<feature type="compositionally biased region" description="Basic residues" evidence="2">
    <location>
        <begin position="117"/>
        <end position="131"/>
    </location>
</feature>
<protein>
    <recommendedName>
        <fullName evidence="1">RNA chaperone ProQ</fullName>
    </recommendedName>
</protein>
<dbReference type="EMBL" id="L42023">
    <property type="protein sequence ID" value="AAC23323.1"/>
    <property type="status" value="ALT_FRAME"/>
    <property type="molecule type" value="Genomic_DNA"/>
</dbReference>
<dbReference type="EMBL" id="L42023">
    <property type="protein sequence ID" value="AAC23315.1"/>
    <property type="status" value="ALT_FRAME"/>
    <property type="molecule type" value="Genomic_DNA"/>
</dbReference>
<dbReference type="PIR" id="G64135">
    <property type="entry name" value="G64135"/>
</dbReference>
<dbReference type="PIR" id="H64039">
    <property type="entry name" value="H64039"/>
</dbReference>
<dbReference type="RefSeq" id="NP_439812.1">
    <property type="nucleotide sequence ID" value="NC_000907.1"/>
</dbReference>
<dbReference type="SMR" id="P44286"/>
<dbReference type="STRING" id="71421.HI_1670"/>
<dbReference type="EnsemblBacteria" id="AAC23315">
    <property type="protein sequence ID" value="AAC23315"/>
    <property type="gene ID" value="HI_1669"/>
</dbReference>
<dbReference type="EnsemblBacteria" id="AAC23323">
    <property type="protein sequence ID" value="AAC23323"/>
    <property type="gene ID" value="HI_1670"/>
</dbReference>
<dbReference type="KEGG" id="hin:HI_1669"/>
<dbReference type="KEGG" id="hin:HI_1670"/>
<dbReference type="PATRIC" id="fig|71421.8.peg.1748"/>
<dbReference type="eggNOG" id="COG3109">
    <property type="taxonomic scope" value="Bacteria"/>
</dbReference>
<dbReference type="HOGENOM" id="CLU_3270840_0_0_6"/>
<dbReference type="OrthoDB" id="8421419at2"/>
<dbReference type="PhylomeDB" id="P44286"/>
<dbReference type="Proteomes" id="UP000000579">
    <property type="component" value="Chromosome"/>
</dbReference>
<dbReference type="GO" id="GO:0005829">
    <property type="term" value="C:cytosol"/>
    <property type="evidence" value="ECO:0000318"/>
    <property type="project" value="GO_Central"/>
</dbReference>
<dbReference type="GO" id="GO:0033592">
    <property type="term" value="F:RNA strand annealing activity"/>
    <property type="evidence" value="ECO:0000318"/>
    <property type="project" value="GO_Central"/>
</dbReference>
<dbReference type="GO" id="GO:0034057">
    <property type="term" value="F:RNA strand-exchange activity"/>
    <property type="evidence" value="ECO:0000318"/>
    <property type="project" value="GO_Central"/>
</dbReference>
<dbReference type="GO" id="GO:0010608">
    <property type="term" value="P:post-transcriptional regulation of gene expression"/>
    <property type="evidence" value="ECO:0000318"/>
    <property type="project" value="GO_Central"/>
</dbReference>
<dbReference type="Gene3D" id="1.10.1710.10">
    <property type="entry name" value="ProQ/FinO domain"/>
    <property type="match status" value="1"/>
</dbReference>
<dbReference type="HAMAP" id="MF_00749">
    <property type="entry name" value="ProQ"/>
    <property type="match status" value="1"/>
</dbReference>
<dbReference type="InterPro" id="IPR023529">
    <property type="entry name" value="ProQ"/>
</dbReference>
<dbReference type="InterPro" id="IPR016103">
    <property type="entry name" value="ProQ/FinO"/>
</dbReference>
<dbReference type="InterPro" id="IPR036442">
    <property type="entry name" value="ProQ/FinO_sf"/>
</dbReference>
<dbReference type="InterPro" id="IPR035236">
    <property type="entry name" value="ProQ_C"/>
</dbReference>
<dbReference type="NCBIfam" id="NF003434">
    <property type="entry name" value="PRK04950.1"/>
    <property type="match status" value="1"/>
</dbReference>
<dbReference type="PANTHER" id="PTHR38106">
    <property type="entry name" value="RNA CHAPERONE PROQ"/>
    <property type="match status" value="1"/>
</dbReference>
<dbReference type="PANTHER" id="PTHR38106:SF1">
    <property type="entry name" value="RNA CHAPERONE PROQ"/>
    <property type="match status" value="1"/>
</dbReference>
<dbReference type="Pfam" id="PF04352">
    <property type="entry name" value="ProQ"/>
    <property type="match status" value="1"/>
</dbReference>
<dbReference type="Pfam" id="PF17516">
    <property type="entry name" value="ProQ_C"/>
    <property type="match status" value="1"/>
</dbReference>
<dbReference type="SMART" id="SM00945">
    <property type="entry name" value="ProQ"/>
    <property type="match status" value="1"/>
</dbReference>
<dbReference type="SUPFAM" id="SSF48657">
    <property type="entry name" value="FinO-like"/>
    <property type="match status" value="1"/>
</dbReference>
<comment type="function">
    <text evidence="1">RNA chaperone with significant RNA binding, RNA strand exchange and RNA duplexing activities.</text>
</comment>
<comment type="subcellular location">
    <subcellularLocation>
        <location evidence="1">Cytoplasm</location>
    </subcellularLocation>
</comment>
<comment type="similarity">
    <text evidence="1">Belongs to the ProQ family.</text>
</comment>
<comment type="sequence caution" evidence="3">
    <conflict type="frameshift">
        <sequence resource="EMBL-CDS" id="AAC23315"/>
    </conflict>
    <text>Produces two separate ORFs.</text>
</comment>
<keyword id="KW-0143">Chaperone</keyword>
<keyword id="KW-0963">Cytoplasm</keyword>
<keyword id="KW-1185">Reference proteome</keyword>
<keyword id="KW-0694">RNA-binding</keyword>
<sequence length="197" mass="21729">MQTEVQKLTNAKAIITYLAEKFPLCFVLEGEAKPLKIGLFQDLAEALQDDERVSKTQLRQALRQYTSNWRYLYGCREGAVRVDLQGNPAGVLDAEHVAHAAQQLAEAKARFAEKRAAAKKAQQKKHPRKPANKNLKKESKLSLSAVDFSQISVGSVVKVKAGDNAKKATVVEVLKDSARVELENGLIMNVAADRLFA</sequence>
<organism>
    <name type="scientific">Haemophilus influenzae (strain ATCC 51907 / DSM 11121 / KW20 / Rd)</name>
    <dbReference type="NCBI Taxonomy" id="71421"/>
    <lineage>
        <taxon>Bacteria</taxon>
        <taxon>Pseudomonadati</taxon>
        <taxon>Pseudomonadota</taxon>
        <taxon>Gammaproteobacteria</taxon>
        <taxon>Pasteurellales</taxon>
        <taxon>Pasteurellaceae</taxon>
        <taxon>Haemophilus</taxon>
    </lineage>
</organism>
<gene>
    <name evidence="1" type="primary">proQ</name>
    <name type="ordered locus">HI_1669/HI_1670</name>
</gene>
<accession>P44286</accession>
<accession>O05079</accession>
<accession>Q57119</accession>
<proteinExistence type="inferred from homology"/>